<comment type="similarity">
    <text evidence="1">Belongs to the small heat shock protein (HSP20) family.</text>
</comment>
<organism>
    <name type="scientific">Rickettsia felis (strain ATCC VR-1525 / URRWXCal2)</name>
    <name type="common">Rickettsia azadi</name>
    <dbReference type="NCBI Taxonomy" id="315456"/>
    <lineage>
        <taxon>Bacteria</taxon>
        <taxon>Pseudomonadati</taxon>
        <taxon>Pseudomonadota</taxon>
        <taxon>Alphaproteobacteria</taxon>
        <taxon>Rickettsiales</taxon>
        <taxon>Rickettsiaceae</taxon>
        <taxon>Rickettsieae</taxon>
        <taxon>Rickettsia</taxon>
        <taxon>spotted fever group</taxon>
    </lineage>
</organism>
<protein>
    <recommendedName>
        <fullName>Small heat shock protein C3</fullName>
    </recommendedName>
</protein>
<evidence type="ECO:0000255" key="1">
    <source>
        <dbReference type="PROSITE-ProRule" id="PRU00285"/>
    </source>
</evidence>
<sequence length="196" mass="22504">MNTYLSEITNLIYYINLKEVCMLYNNIKSYLLSGITVILLTGHPVIAADNVSKPDNKSQTAYLQHPPDLRPFSIFDYYLDNMFEHKLSAYSSSAIRTKFITQDKQYILVLEVPGYDKSQIKVKVNSNKLFITGNVEQNNKSEASDDYTKRNFNYVVSLYEDVDQNNISSNLKNGILTITLPRIEVKEKDAKEIPIQ</sequence>
<dbReference type="EMBL" id="CP000054">
    <property type="protein sequence ID" value="AAY62303.1"/>
    <property type="molecule type" value="Genomic_DNA"/>
</dbReference>
<dbReference type="EMBL" id="CP000055">
    <property type="protein sequence ID" value="AAY62347.1"/>
    <property type="molecule type" value="Genomic_DNA"/>
</dbReference>
<dbReference type="SMR" id="Q4UJB0"/>
<dbReference type="KEGG" id="rfe:RF_p52"/>
<dbReference type="KEGG" id="rfe:RF_pd52"/>
<dbReference type="HOGENOM" id="CLU_135634_0_0_5"/>
<dbReference type="OrthoDB" id="9808910at2"/>
<dbReference type="Proteomes" id="UP000008548">
    <property type="component" value="Plasmid pRF"/>
</dbReference>
<dbReference type="Proteomes" id="UP000008548">
    <property type="component" value="Plasmid pRFdelta"/>
</dbReference>
<dbReference type="GO" id="GO:0009408">
    <property type="term" value="P:response to heat"/>
    <property type="evidence" value="ECO:0007669"/>
    <property type="project" value="InterPro"/>
</dbReference>
<dbReference type="CDD" id="cd06464">
    <property type="entry name" value="ACD_sHsps-like"/>
    <property type="match status" value="1"/>
</dbReference>
<dbReference type="Gene3D" id="2.60.40.790">
    <property type="match status" value="1"/>
</dbReference>
<dbReference type="InterPro" id="IPR002068">
    <property type="entry name" value="A-crystallin/Hsp20_dom"/>
</dbReference>
<dbReference type="InterPro" id="IPR008978">
    <property type="entry name" value="HSP20-like_chaperone"/>
</dbReference>
<dbReference type="InterPro" id="IPR044587">
    <property type="entry name" value="HSP21-like"/>
</dbReference>
<dbReference type="PANTHER" id="PTHR46733">
    <property type="entry name" value="26.5 KDA HEAT SHOCK PROTEIN, MITOCHONDRIAL"/>
    <property type="match status" value="1"/>
</dbReference>
<dbReference type="PANTHER" id="PTHR46733:SF4">
    <property type="entry name" value="HEAT SHOCK PROTEIN 21, CHLOROPLASTIC"/>
    <property type="match status" value="1"/>
</dbReference>
<dbReference type="Pfam" id="PF00011">
    <property type="entry name" value="HSP20"/>
    <property type="match status" value="1"/>
</dbReference>
<dbReference type="SUPFAM" id="SSF49764">
    <property type="entry name" value="HSP20-like chaperones"/>
    <property type="match status" value="1"/>
</dbReference>
<dbReference type="PROSITE" id="PS01031">
    <property type="entry name" value="SHSP"/>
    <property type="match status" value="1"/>
</dbReference>
<gene>
    <name type="primary">hspc3-1</name>
    <name type="synonym">hspP1-1</name>
    <name type="ordered locus">RF_p52</name>
</gene>
<gene>
    <name type="primary">hspC3-2</name>
    <name type="synonym">hspP1-2</name>
    <name type="ordered locus">RF_pd52</name>
</gene>
<reference key="1">
    <citation type="journal article" date="2005" name="PLoS Biol.">
        <title>The genome sequence of Rickettsia felis identifies the first putative conjugative plasmid in an obligate intracellular parasite.</title>
        <authorList>
            <person name="Ogata H."/>
            <person name="Renesto P."/>
            <person name="Audic S."/>
            <person name="Robert C."/>
            <person name="Blanc G."/>
            <person name="Fournier P.-E."/>
            <person name="Parinello H."/>
            <person name="Claverie J.-M."/>
            <person name="Raoult D."/>
        </authorList>
    </citation>
    <scope>NUCLEOTIDE SEQUENCE [LARGE SCALE GENOMIC DNA]</scope>
    <source>
        <strain>ATCC VR-1525 / URRWXCal2</strain>
        <plasmid>pRF</plasmid>
        <plasmid>pRFdelta</plasmid>
    </source>
</reference>
<keyword id="KW-0614">Plasmid</keyword>
<keyword id="KW-0346">Stress response</keyword>
<accession>Q4UJB0</accession>
<name>HSPC3_RICFE</name>
<proteinExistence type="inferred from homology"/>
<feature type="chain" id="PRO_0000288742" description="Small heat shock protein C3">
    <location>
        <begin position="1"/>
        <end position="196"/>
    </location>
</feature>
<feature type="domain" description="sHSP" evidence="1">
    <location>
        <begin position="88"/>
        <end position="196"/>
    </location>
</feature>
<geneLocation type="plasmid">
    <name>pRFdelta</name>
</geneLocation>
<geneLocation type="plasmid">
    <name>pRF</name>
</geneLocation>